<name>RL9_BRUA1</name>
<proteinExistence type="inferred from homology"/>
<comment type="function">
    <text evidence="1">Binds to the 23S rRNA.</text>
</comment>
<comment type="similarity">
    <text evidence="1">Belongs to the bacterial ribosomal protein bL9 family.</text>
</comment>
<reference key="1">
    <citation type="journal article" date="2008" name="PLoS ONE">
        <title>Genome sequence of Brucella abortus vaccine strain S19 compared to virulent strains yields candidate virulence genes.</title>
        <authorList>
            <person name="Crasta O.R."/>
            <person name="Folkerts O."/>
            <person name="Fei Z."/>
            <person name="Mane S.P."/>
            <person name="Evans C."/>
            <person name="Martino-Catt S."/>
            <person name="Bricker B."/>
            <person name="Yu G."/>
            <person name="Du L."/>
            <person name="Sobral B.W."/>
        </authorList>
    </citation>
    <scope>NUCLEOTIDE SEQUENCE [LARGE SCALE GENOMIC DNA]</scope>
    <source>
        <strain>S19</strain>
    </source>
</reference>
<dbReference type="EMBL" id="CP000887">
    <property type="protein sequence ID" value="ACD71981.1"/>
    <property type="molecule type" value="Genomic_DNA"/>
</dbReference>
<dbReference type="RefSeq" id="WP_002963608.1">
    <property type="nucleotide sequence ID" value="NC_010742.1"/>
</dbReference>
<dbReference type="SMR" id="B2S9V1"/>
<dbReference type="GeneID" id="97534178"/>
<dbReference type="KEGG" id="bmc:BAbS19_I04420"/>
<dbReference type="HOGENOM" id="CLU_078938_1_0_5"/>
<dbReference type="Proteomes" id="UP000002565">
    <property type="component" value="Chromosome 1"/>
</dbReference>
<dbReference type="GO" id="GO:1990904">
    <property type="term" value="C:ribonucleoprotein complex"/>
    <property type="evidence" value="ECO:0007669"/>
    <property type="project" value="UniProtKB-KW"/>
</dbReference>
<dbReference type="GO" id="GO:0005840">
    <property type="term" value="C:ribosome"/>
    <property type="evidence" value="ECO:0007669"/>
    <property type="project" value="UniProtKB-KW"/>
</dbReference>
<dbReference type="GO" id="GO:0019843">
    <property type="term" value="F:rRNA binding"/>
    <property type="evidence" value="ECO:0007669"/>
    <property type="project" value="UniProtKB-UniRule"/>
</dbReference>
<dbReference type="GO" id="GO:0003735">
    <property type="term" value="F:structural constituent of ribosome"/>
    <property type="evidence" value="ECO:0007669"/>
    <property type="project" value="InterPro"/>
</dbReference>
<dbReference type="GO" id="GO:0006412">
    <property type="term" value="P:translation"/>
    <property type="evidence" value="ECO:0007669"/>
    <property type="project" value="UniProtKB-UniRule"/>
</dbReference>
<dbReference type="Gene3D" id="3.10.430.100">
    <property type="entry name" value="Ribosomal protein L9, C-terminal domain"/>
    <property type="match status" value="1"/>
</dbReference>
<dbReference type="Gene3D" id="3.40.5.10">
    <property type="entry name" value="Ribosomal protein L9, N-terminal domain"/>
    <property type="match status" value="1"/>
</dbReference>
<dbReference type="HAMAP" id="MF_00503">
    <property type="entry name" value="Ribosomal_bL9"/>
    <property type="match status" value="1"/>
</dbReference>
<dbReference type="InterPro" id="IPR000244">
    <property type="entry name" value="Ribosomal_bL9"/>
</dbReference>
<dbReference type="InterPro" id="IPR009027">
    <property type="entry name" value="Ribosomal_bL9/RNase_H1_N"/>
</dbReference>
<dbReference type="InterPro" id="IPR020594">
    <property type="entry name" value="Ribosomal_bL9_bac/chp"/>
</dbReference>
<dbReference type="InterPro" id="IPR020069">
    <property type="entry name" value="Ribosomal_bL9_C"/>
</dbReference>
<dbReference type="InterPro" id="IPR036791">
    <property type="entry name" value="Ribosomal_bL9_C_sf"/>
</dbReference>
<dbReference type="InterPro" id="IPR020070">
    <property type="entry name" value="Ribosomal_bL9_N"/>
</dbReference>
<dbReference type="InterPro" id="IPR036935">
    <property type="entry name" value="Ribosomal_bL9_N_sf"/>
</dbReference>
<dbReference type="NCBIfam" id="TIGR00158">
    <property type="entry name" value="L9"/>
    <property type="match status" value="1"/>
</dbReference>
<dbReference type="PANTHER" id="PTHR21368">
    <property type="entry name" value="50S RIBOSOMAL PROTEIN L9"/>
    <property type="match status" value="1"/>
</dbReference>
<dbReference type="Pfam" id="PF03948">
    <property type="entry name" value="Ribosomal_L9_C"/>
    <property type="match status" value="1"/>
</dbReference>
<dbReference type="Pfam" id="PF01281">
    <property type="entry name" value="Ribosomal_L9_N"/>
    <property type="match status" value="1"/>
</dbReference>
<dbReference type="SUPFAM" id="SSF55658">
    <property type="entry name" value="L9 N-domain-like"/>
    <property type="match status" value="1"/>
</dbReference>
<dbReference type="SUPFAM" id="SSF55653">
    <property type="entry name" value="Ribosomal protein L9 C-domain"/>
    <property type="match status" value="1"/>
</dbReference>
<dbReference type="PROSITE" id="PS00651">
    <property type="entry name" value="RIBOSOMAL_L9"/>
    <property type="match status" value="1"/>
</dbReference>
<keyword id="KW-0687">Ribonucleoprotein</keyword>
<keyword id="KW-0689">Ribosomal protein</keyword>
<keyword id="KW-0694">RNA-binding</keyword>
<keyword id="KW-0699">rRNA-binding</keyword>
<evidence type="ECO:0000255" key="1">
    <source>
        <dbReference type="HAMAP-Rule" id="MF_00503"/>
    </source>
</evidence>
<evidence type="ECO:0000305" key="2"/>
<feature type="chain" id="PRO_1000126876" description="Large ribosomal subunit protein bL9">
    <location>
        <begin position="1"/>
        <end position="189"/>
    </location>
</feature>
<accession>B2S9V1</accession>
<gene>
    <name evidence="1" type="primary">rplI</name>
    <name type="ordered locus">BAbS19_I04420</name>
</gene>
<organism>
    <name type="scientific">Brucella abortus (strain S19)</name>
    <dbReference type="NCBI Taxonomy" id="430066"/>
    <lineage>
        <taxon>Bacteria</taxon>
        <taxon>Pseudomonadati</taxon>
        <taxon>Pseudomonadota</taxon>
        <taxon>Alphaproteobacteria</taxon>
        <taxon>Hyphomicrobiales</taxon>
        <taxon>Brucellaceae</taxon>
        <taxon>Brucella/Ochrobactrum group</taxon>
        <taxon>Brucella</taxon>
    </lineage>
</organism>
<sequence>MEVILLERIGRLGQMGDTVKVKDGYARNFLLPQGKALRANEANKKKFEGQRAQLEAQNLERKNEAQAVADKLNGESFIVVRSAGETGQLYGSVSTRDIAEIITANGFTLHRNQVELNHPIKTIGLHEVSVSLHPEVQVKVMVNIARSTEEAERQAKGEDLTSIEAIYGIEEQPLSEEVFDDEDEAEDQA</sequence>
<protein>
    <recommendedName>
        <fullName evidence="1">Large ribosomal subunit protein bL9</fullName>
    </recommendedName>
    <alternativeName>
        <fullName evidence="2">50S ribosomal protein L9</fullName>
    </alternativeName>
</protein>